<evidence type="ECO:0000255" key="1">
    <source>
        <dbReference type="HAMAP-Rule" id="MF_00096"/>
    </source>
</evidence>
<gene>
    <name evidence="1" type="primary">mutS</name>
    <name type="ordered locus">SPA2766</name>
</gene>
<name>MUTS_SALPA</name>
<reference key="1">
    <citation type="journal article" date="2004" name="Nat. Genet.">
        <title>Comparison of genome degradation in Paratyphi A and Typhi, human-restricted serovars of Salmonella enterica that cause typhoid.</title>
        <authorList>
            <person name="McClelland M."/>
            <person name="Sanderson K.E."/>
            <person name="Clifton S.W."/>
            <person name="Latreille P."/>
            <person name="Porwollik S."/>
            <person name="Sabo A."/>
            <person name="Meyer R."/>
            <person name="Bieri T."/>
            <person name="Ozersky P."/>
            <person name="McLellan M."/>
            <person name="Harkins C.R."/>
            <person name="Wang C."/>
            <person name="Nguyen C."/>
            <person name="Berghoff A."/>
            <person name="Elliott G."/>
            <person name="Kohlberg S."/>
            <person name="Strong C."/>
            <person name="Du F."/>
            <person name="Carter J."/>
            <person name="Kremizki C."/>
            <person name="Layman D."/>
            <person name="Leonard S."/>
            <person name="Sun H."/>
            <person name="Fulton L."/>
            <person name="Nash W."/>
            <person name="Miner T."/>
            <person name="Minx P."/>
            <person name="Delehaunty K."/>
            <person name="Fronick C."/>
            <person name="Magrini V."/>
            <person name="Nhan M."/>
            <person name="Warren W."/>
            <person name="Florea L."/>
            <person name="Spieth J."/>
            <person name="Wilson R.K."/>
        </authorList>
    </citation>
    <scope>NUCLEOTIDE SEQUENCE [LARGE SCALE GENOMIC DNA]</scope>
    <source>
        <strain>ATCC 9150 / SARB42</strain>
    </source>
</reference>
<proteinExistence type="inferred from homology"/>
<sequence length="855" mass="95349">MNESFDKDFSNHTPMMQQYLKLKAQHPEILLFYRMGDFYELFYDDAKRASQLLDISLTKRGASAGEPIPMAGIPHHAVENYLAKLVNQGESVAICEQIGDPATSKGPVERKVVRIVTPGTISDEALLQERQDNLLAAIWQDGKGYGYATLDISSGRFRLSEPADRETMAAELQRTNPAELLYAEDFAEMALIEGRRGLRRRPLWEFEIDTARQQLNLQFGTRDLVGFGVENASRGLCAAGCLLQYVKDTQRTSLPHIRSITMERQQDSIIMDAATRRNLEITQNLAGGVENTLAAVLDCTVTPMGSRMLKRWLHMPVRNTDILRERQQTIGALQDTVSELQPVLRQVGDLERILARLALRTARPRDLARMRHAFQQLPELHAQLETVGSAPVQALRKKMGDFAELRDLLERAIIDAPPVLVRDGGVIAPGYHEELDEWRALADGATDYLDRLEIRERERTGLDTLKVGYNAVHGYYIQISRGQSHLAPINYVRRQTLKNAERYIIPELKEYEDKVLTSKGKALALEKQLYDELFDLLLPHLADLQQSANALAELDVLVNLAERAWTLNYTCPTFTDKPGIRITEGRHPVVEQVLNEPFIANPLNLSPQRRMLIITGPNMGGKSTYMRQTALIALLAYIGSYVPAQNVEIGPIDRIFTRVGAADDLASGRSTFMVEMTETANILHNATENSLVLMDEIGRGTSTYDGLSLAWACAENLANKIKALTLFATHYFELTQLPEKMEGVANVHLDALEHGDTIAFMHSVQDGAASKSYGLAVAALAGVPKEVIKRARQKLRELESISPNAAATQVDGTQMSLLAAPEETSPAVEALENLDPDSLTPRQALEWIYRLKSLV</sequence>
<keyword id="KW-0067">ATP-binding</keyword>
<keyword id="KW-0227">DNA damage</keyword>
<keyword id="KW-0234">DNA repair</keyword>
<keyword id="KW-0238">DNA-binding</keyword>
<keyword id="KW-0547">Nucleotide-binding</keyword>
<protein>
    <recommendedName>
        <fullName evidence="1">DNA mismatch repair protein MutS</fullName>
    </recommendedName>
</protein>
<feature type="chain" id="PRO_0000224402" description="DNA mismatch repair protein MutS">
    <location>
        <begin position="1"/>
        <end position="855"/>
    </location>
</feature>
<feature type="binding site" evidence="1">
    <location>
        <begin position="616"/>
        <end position="623"/>
    </location>
    <ligand>
        <name>ATP</name>
        <dbReference type="ChEBI" id="CHEBI:30616"/>
    </ligand>
</feature>
<dbReference type="EMBL" id="CP000026">
    <property type="protein sequence ID" value="AAV78621.1"/>
    <property type="molecule type" value="Genomic_DNA"/>
</dbReference>
<dbReference type="RefSeq" id="WP_001005811.1">
    <property type="nucleotide sequence ID" value="NC_006511.1"/>
</dbReference>
<dbReference type="SMR" id="Q5PEE6"/>
<dbReference type="KEGG" id="spt:SPA2766"/>
<dbReference type="HOGENOM" id="CLU_002472_4_0_6"/>
<dbReference type="Proteomes" id="UP000008185">
    <property type="component" value="Chromosome"/>
</dbReference>
<dbReference type="GO" id="GO:0005829">
    <property type="term" value="C:cytosol"/>
    <property type="evidence" value="ECO:0007669"/>
    <property type="project" value="TreeGrafter"/>
</dbReference>
<dbReference type="GO" id="GO:0005524">
    <property type="term" value="F:ATP binding"/>
    <property type="evidence" value="ECO:0007669"/>
    <property type="project" value="UniProtKB-UniRule"/>
</dbReference>
<dbReference type="GO" id="GO:0140664">
    <property type="term" value="F:ATP-dependent DNA damage sensor activity"/>
    <property type="evidence" value="ECO:0007669"/>
    <property type="project" value="InterPro"/>
</dbReference>
<dbReference type="GO" id="GO:0003684">
    <property type="term" value="F:damaged DNA binding"/>
    <property type="evidence" value="ECO:0007669"/>
    <property type="project" value="UniProtKB-UniRule"/>
</dbReference>
<dbReference type="GO" id="GO:0030983">
    <property type="term" value="F:mismatched DNA binding"/>
    <property type="evidence" value="ECO:0007669"/>
    <property type="project" value="InterPro"/>
</dbReference>
<dbReference type="GO" id="GO:0006298">
    <property type="term" value="P:mismatch repair"/>
    <property type="evidence" value="ECO:0007669"/>
    <property type="project" value="UniProtKB-UniRule"/>
</dbReference>
<dbReference type="CDD" id="cd03284">
    <property type="entry name" value="ABC_MutS1"/>
    <property type="match status" value="1"/>
</dbReference>
<dbReference type="FunFam" id="1.10.1420.10:FF:000002">
    <property type="entry name" value="DNA mismatch repair protein MutS"/>
    <property type="match status" value="1"/>
</dbReference>
<dbReference type="FunFam" id="3.30.420.110:FF:000001">
    <property type="entry name" value="DNA mismatch repair protein MutS"/>
    <property type="match status" value="1"/>
</dbReference>
<dbReference type="FunFam" id="3.40.1170.10:FF:000001">
    <property type="entry name" value="DNA mismatch repair protein MutS"/>
    <property type="match status" value="1"/>
</dbReference>
<dbReference type="FunFam" id="3.40.50.300:FF:000283">
    <property type="entry name" value="DNA mismatch repair protein MutS"/>
    <property type="match status" value="1"/>
</dbReference>
<dbReference type="Gene3D" id="1.10.1420.10">
    <property type="match status" value="2"/>
</dbReference>
<dbReference type="Gene3D" id="6.10.140.430">
    <property type="match status" value="1"/>
</dbReference>
<dbReference type="Gene3D" id="3.40.1170.10">
    <property type="entry name" value="DNA repair protein MutS, domain I"/>
    <property type="match status" value="1"/>
</dbReference>
<dbReference type="Gene3D" id="3.30.420.110">
    <property type="entry name" value="MutS, connector domain"/>
    <property type="match status" value="1"/>
</dbReference>
<dbReference type="Gene3D" id="3.40.50.300">
    <property type="entry name" value="P-loop containing nucleotide triphosphate hydrolases"/>
    <property type="match status" value="1"/>
</dbReference>
<dbReference type="HAMAP" id="MF_00096">
    <property type="entry name" value="MutS"/>
    <property type="match status" value="1"/>
</dbReference>
<dbReference type="InterPro" id="IPR005748">
    <property type="entry name" value="DNA_mismatch_repair_MutS"/>
</dbReference>
<dbReference type="InterPro" id="IPR007695">
    <property type="entry name" value="DNA_mismatch_repair_MutS-lik_N"/>
</dbReference>
<dbReference type="InterPro" id="IPR017261">
    <property type="entry name" value="DNA_mismatch_repair_MutS/MSH"/>
</dbReference>
<dbReference type="InterPro" id="IPR000432">
    <property type="entry name" value="DNA_mismatch_repair_MutS_C"/>
</dbReference>
<dbReference type="InterPro" id="IPR007861">
    <property type="entry name" value="DNA_mismatch_repair_MutS_clamp"/>
</dbReference>
<dbReference type="InterPro" id="IPR007696">
    <property type="entry name" value="DNA_mismatch_repair_MutS_core"/>
</dbReference>
<dbReference type="InterPro" id="IPR016151">
    <property type="entry name" value="DNA_mismatch_repair_MutS_N"/>
</dbReference>
<dbReference type="InterPro" id="IPR036187">
    <property type="entry name" value="DNA_mismatch_repair_MutS_sf"/>
</dbReference>
<dbReference type="InterPro" id="IPR007860">
    <property type="entry name" value="DNA_mmatch_repair_MutS_con_dom"/>
</dbReference>
<dbReference type="InterPro" id="IPR045076">
    <property type="entry name" value="MutS"/>
</dbReference>
<dbReference type="InterPro" id="IPR036678">
    <property type="entry name" value="MutS_con_dom_sf"/>
</dbReference>
<dbReference type="InterPro" id="IPR027417">
    <property type="entry name" value="P-loop_NTPase"/>
</dbReference>
<dbReference type="NCBIfam" id="TIGR01070">
    <property type="entry name" value="mutS1"/>
    <property type="match status" value="1"/>
</dbReference>
<dbReference type="NCBIfam" id="NF003810">
    <property type="entry name" value="PRK05399.1"/>
    <property type="match status" value="1"/>
</dbReference>
<dbReference type="PANTHER" id="PTHR11361:SF34">
    <property type="entry name" value="DNA MISMATCH REPAIR PROTEIN MSH1, MITOCHONDRIAL"/>
    <property type="match status" value="1"/>
</dbReference>
<dbReference type="PANTHER" id="PTHR11361">
    <property type="entry name" value="DNA MISMATCH REPAIR PROTEIN MUTS FAMILY MEMBER"/>
    <property type="match status" value="1"/>
</dbReference>
<dbReference type="Pfam" id="PF01624">
    <property type="entry name" value="MutS_I"/>
    <property type="match status" value="1"/>
</dbReference>
<dbReference type="Pfam" id="PF05188">
    <property type="entry name" value="MutS_II"/>
    <property type="match status" value="1"/>
</dbReference>
<dbReference type="Pfam" id="PF05192">
    <property type="entry name" value="MutS_III"/>
    <property type="match status" value="1"/>
</dbReference>
<dbReference type="Pfam" id="PF05190">
    <property type="entry name" value="MutS_IV"/>
    <property type="match status" value="1"/>
</dbReference>
<dbReference type="Pfam" id="PF00488">
    <property type="entry name" value="MutS_V"/>
    <property type="match status" value="1"/>
</dbReference>
<dbReference type="PIRSF" id="PIRSF037677">
    <property type="entry name" value="DNA_mis_repair_Msh6"/>
    <property type="match status" value="1"/>
</dbReference>
<dbReference type="SMART" id="SM00534">
    <property type="entry name" value="MUTSac"/>
    <property type="match status" value="1"/>
</dbReference>
<dbReference type="SMART" id="SM00533">
    <property type="entry name" value="MUTSd"/>
    <property type="match status" value="1"/>
</dbReference>
<dbReference type="SUPFAM" id="SSF55271">
    <property type="entry name" value="DNA repair protein MutS, domain I"/>
    <property type="match status" value="1"/>
</dbReference>
<dbReference type="SUPFAM" id="SSF53150">
    <property type="entry name" value="DNA repair protein MutS, domain II"/>
    <property type="match status" value="1"/>
</dbReference>
<dbReference type="SUPFAM" id="SSF48334">
    <property type="entry name" value="DNA repair protein MutS, domain III"/>
    <property type="match status" value="1"/>
</dbReference>
<dbReference type="SUPFAM" id="SSF52540">
    <property type="entry name" value="P-loop containing nucleoside triphosphate hydrolases"/>
    <property type="match status" value="1"/>
</dbReference>
<dbReference type="PROSITE" id="PS00486">
    <property type="entry name" value="DNA_MISMATCH_REPAIR_2"/>
    <property type="match status" value="1"/>
</dbReference>
<accession>Q5PEE6</accession>
<organism>
    <name type="scientific">Salmonella paratyphi A (strain ATCC 9150 / SARB42)</name>
    <dbReference type="NCBI Taxonomy" id="295319"/>
    <lineage>
        <taxon>Bacteria</taxon>
        <taxon>Pseudomonadati</taxon>
        <taxon>Pseudomonadota</taxon>
        <taxon>Gammaproteobacteria</taxon>
        <taxon>Enterobacterales</taxon>
        <taxon>Enterobacteriaceae</taxon>
        <taxon>Salmonella</taxon>
    </lineage>
</organism>
<comment type="function">
    <text evidence="1">This protein is involved in the repair of mismatches in DNA. It is possible that it carries out the mismatch recognition step. This protein has a weak ATPase activity.</text>
</comment>
<comment type="similarity">
    <text evidence="1">Belongs to the DNA mismatch repair MutS family.</text>
</comment>